<name>DEOD_STRGC</name>
<evidence type="ECO:0000250" key="1">
    <source>
        <dbReference type="UniProtKB" id="P50389"/>
    </source>
</evidence>
<evidence type="ECO:0000255" key="2">
    <source>
        <dbReference type="HAMAP-Rule" id="MF_01627"/>
    </source>
</evidence>
<gene>
    <name evidence="2" type="primary">deoD</name>
    <name type="ordered locus">SGO_1260</name>
</gene>
<organism>
    <name type="scientific">Streptococcus gordonii (strain Challis / ATCC 35105 / BCRC 15272 / CH1 / DL1 / V288)</name>
    <dbReference type="NCBI Taxonomy" id="467705"/>
    <lineage>
        <taxon>Bacteria</taxon>
        <taxon>Bacillati</taxon>
        <taxon>Bacillota</taxon>
        <taxon>Bacilli</taxon>
        <taxon>Lactobacillales</taxon>
        <taxon>Streptococcaceae</taxon>
        <taxon>Streptococcus</taxon>
    </lineage>
</organism>
<proteinExistence type="inferred from homology"/>
<protein>
    <recommendedName>
        <fullName evidence="2">Purine nucleoside phosphorylase DeoD-type</fullName>
        <shortName evidence="2">PNP</shortName>
        <ecNumber evidence="2">2.4.2.1</ecNumber>
    </recommendedName>
</protein>
<feature type="chain" id="PRO_1000186224" description="Purine nucleoside phosphorylase DeoD-type">
    <location>
        <begin position="1"/>
        <end position="237"/>
    </location>
</feature>
<feature type="active site" description="Proton donor" evidence="2">
    <location>
        <position position="204"/>
    </location>
</feature>
<feature type="binding site" evidence="1">
    <location>
        <position position="4"/>
    </location>
    <ligand>
        <name>a purine D-ribonucleoside</name>
        <dbReference type="ChEBI" id="CHEBI:142355"/>
        <note>ligand shared between dimeric partners</note>
    </ligand>
</feature>
<feature type="binding site" description="in other chain" evidence="1">
    <location>
        <position position="20"/>
    </location>
    <ligand>
        <name>phosphate</name>
        <dbReference type="ChEBI" id="CHEBI:43474"/>
        <note>ligand shared between dimeric partners</note>
    </ligand>
</feature>
<feature type="binding site" description="in other chain" evidence="1">
    <location>
        <position position="24"/>
    </location>
    <ligand>
        <name>phosphate</name>
        <dbReference type="ChEBI" id="CHEBI:43474"/>
        <note>ligand shared between dimeric partners</note>
    </ligand>
</feature>
<feature type="binding site" evidence="1">
    <location>
        <position position="43"/>
    </location>
    <ligand>
        <name>phosphate</name>
        <dbReference type="ChEBI" id="CHEBI:43474"/>
        <note>ligand shared between dimeric partners</note>
    </ligand>
</feature>
<feature type="binding site" description="in other chain" evidence="1">
    <location>
        <begin position="87"/>
        <end position="90"/>
    </location>
    <ligand>
        <name>phosphate</name>
        <dbReference type="ChEBI" id="CHEBI:43474"/>
        <note>ligand shared between dimeric partners</note>
    </ligand>
</feature>
<feature type="binding site" description="in other chain" evidence="1">
    <location>
        <begin position="179"/>
        <end position="181"/>
    </location>
    <ligand>
        <name>a purine D-ribonucleoside</name>
        <dbReference type="ChEBI" id="CHEBI:142355"/>
        <note>ligand shared between dimeric partners</note>
    </ligand>
</feature>
<feature type="binding site" description="in other chain" evidence="1">
    <location>
        <begin position="203"/>
        <end position="204"/>
    </location>
    <ligand>
        <name>a purine D-ribonucleoside</name>
        <dbReference type="ChEBI" id="CHEBI:142355"/>
        <note>ligand shared between dimeric partners</note>
    </ligand>
</feature>
<feature type="site" description="Important for catalytic activity" evidence="2">
    <location>
        <position position="218"/>
    </location>
</feature>
<keyword id="KW-0328">Glycosyltransferase</keyword>
<keyword id="KW-1185">Reference proteome</keyword>
<keyword id="KW-0808">Transferase</keyword>
<dbReference type="EC" id="2.4.2.1" evidence="2"/>
<dbReference type="EMBL" id="CP000725">
    <property type="protein sequence ID" value="ABV10410.1"/>
    <property type="molecule type" value="Genomic_DNA"/>
</dbReference>
<dbReference type="RefSeq" id="WP_012000655.1">
    <property type="nucleotide sequence ID" value="NC_009785.1"/>
</dbReference>
<dbReference type="SMR" id="A8AXN4"/>
<dbReference type="STRING" id="467705.SGO_1260"/>
<dbReference type="GeneID" id="93787496"/>
<dbReference type="KEGG" id="sgo:SGO_1260"/>
<dbReference type="eggNOG" id="COG0813">
    <property type="taxonomic scope" value="Bacteria"/>
</dbReference>
<dbReference type="HOGENOM" id="CLU_068457_2_0_9"/>
<dbReference type="Proteomes" id="UP000001131">
    <property type="component" value="Chromosome"/>
</dbReference>
<dbReference type="GO" id="GO:0005829">
    <property type="term" value="C:cytosol"/>
    <property type="evidence" value="ECO:0007669"/>
    <property type="project" value="TreeGrafter"/>
</dbReference>
<dbReference type="GO" id="GO:0004731">
    <property type="term" value="F:purine-nucleoside phosphorylase activity"/>
    <property type="evidence" value="ECO:0007669"/>
    <property type="project" value="UniProtKB-UniRule"/>
</dbReference>
<dbReference type="GO" id="GO:0006152">
    <property type="term" value="P:purine nucleoside catabolic process"/>
    <property type="evidence" value="ECO:0007669"/>
    <property type="project" value="TreeGrafter"/>
</dbReference>
<dbReference type="CDD" id="cd09006">
    <property type="entry name" value="PNP_EcPNPI-like"/>
    <property type="match status" value="1"/>
</dbReference>
<dbReference type="Gene3D" id="3.40.50.1580">
    <property type="entry name" value="Nucleoside phosphorylase domain"/>
    <property type="match status" value="1"/>
</dbReference>
<dbReference type="HAMAP" id="MF_01627">
    <property type="entry name" value="Pur_nucleosid_phosp"/>
    <property type="match status" value="1"/>
</dbReference>
<dbReference type="InterPro" id="IPR004402">
    <property type="entry name" value="DeoD-type"/>
</dbReference>
<dbReference type="InterPro" id="IPR018016">
    <property type="entry name" value="Nucleoside_phosphorylase_CS"/>
</dbReference>
<dbReference type="InterPro" id="IPR000845">
    <property type="entry name" value="Nucleoside_phosphorylase_d"/>
</dbReference>
<dbReference type="InterPro" id="IPR035994">
    <property type="entry name" value="Nucleoside_phosphorylase_sf"/>
</dbReference>
<dbReference type="NCBIfam" id="TIGR00107">
    <property type="entry name" value="deoD"/>
    <property type="match status" value="1"/>
</dbReference>
<dbReference type="NCBIfam" id="NF004489">
    <property type="entry name" value="PRK05819.1"/>
    <property type="match status" value="1"/>
</dbReference>
<dbReference type="PANTHER" id="PTHR43691:SF11">
    <property type="entry name" value="FI09636P-RELATED"/>
    <property type="match status" value="1"/>
</dbReference>
<dbReference type="PANTHER" id="PTHR43691">
    <property type="entry name" value="URIDINE PHOSPHORYLASE"/>
    <property type="match status" value="1"/>
</dbReference>
<dbReference type="Pfam" id="PF01048">
    <property type="entry name" value="PNP_UDP_1"/>
    <property type="match status" value="1"/>
</dbReference>
<dbReference type="SUPFAM" id="SSF53167">
    <property type="entry name" value="Purine and uridine phosphorylases"/>
    <property type="match status" value="1"/>
</dbReference>
<dbReference type="PROSITE" id="PS01232">
    <property type="entry name" value="PNP_UDP_1"/>
    <property type="match status" value="1"/>
</dbReference>
<sequence length="237" mass="26243">MSIHIAAQQGEIADKILLPGDPLRAKFIAENFLEDAVCFNEVRNMFGYTGTYKGHRVSVMGTGMGMPSISIYARELIVDYGVKKLIRVGTAGSLNEDVHVRELVLAQAAATNSNIIRNDWPQYDFPQIASFDLLDKAYHIAKDLGMTTHVGNVLSSDVFYSNYFEKNIELGKWGVKAVEMEAAALYYLAAQHHVDALAIMTISDSLVNPEEDTTAEERQNTFTDMMKVGLETLIAEA</sequence>
<comment type="function">
    <text evidence="2">Catalyzes the reversible phosphorolytic breakdown of the N-glycosidic bond in the beta-(deoxy)ribonucleoside molecules, with the formation of the corresponding free purine bases and pentose-1-phosphate.</text>
</comment>
<comment type="catalytic activity">
    <reaction evidence="2">
        <text>a purine D-ribonucleoside + phosphate = a purine nucleobase + alpha-D-ribose 1-phosphate</text>
        <dbReference type="Rhea" id="RHEA:19805"/>
        <dbReference type="ChEBI" id="CHEBI:26386"/>
        <dbReference type="ChEBI" id="CHEBI:43474"/>
        <dbReference type="ChEBI" id="CHEBI:57720"/>
        <dbReference type="ChEBI" id="CHEBI:142355"/>
        <dbReference type="EC" id="2.4.2.1"/>
    </reaction>
</comment>
<comment type="catalytic activity">
    <reaction evidence="2">
        <text>a purine 2'-deoxy-D-ribonucleoside + phosphate = a purine nucleobase + 2-deoxy-alpha-D-ribose 1-phosphate</text>
        <dbReference type="Rhea" id="RHEA:36431"/>
        <dbReference type="ChEBI" id="CHEBI:26386"/>
        <dbReference type="ChEBI" id="CHEBI:43474"/>
        <dbReference type="ChEBI" id="CHEBI:57259"/>
        <dbReference type="ChEBI" id="CHEBI:142361"/>
        <dbReference type="EC" id="2.4.2.1"/>
    </reaction>
</comment>
<comment type="subunit">
    <text evidence="2">Homohexamer; trimer of homodimers.</text>
</comment>
<comment type="similarity">
    <text evidence="2">Belongs to the PNP/UDP phosphorylase family.</text>
</comment>
<reference key="1">
    <citation type="journal article" date="2007" name="J. Bacteriol.">
        <title>Genome-wide transcriptional changes in Streptococcus gordonii in response to competence signaling peptide.</title>
        <authorList>
            <person name="Vickerman M.M."/>
            <person name="Iobst S."/>
            <person name="Jesionowski A.M."/>
            <person name="Gill S.R."/>
        </authorList>
    </citation>
    <scope>NUCLEOTIDE SEQUENCE [LARGE SCALE GENOMIC DNA]</scope>
    <source>
        <strain>Challis / ATCC 35105 / BCRC 15272 / CH1 / DL1 / V288</strain>
    </source>
</reference>
<accession>A8AXN4</accession>